<accession>Q9PPX7</accession>
<keyword id="KW-0963">Cytoplasm</keyword>
<keyword id="KW-0648">Protein biosynthesis</keyword>
<keyword id="KW-1185">Reference proteome</keyword>
<organism>
    <name type="scientific">Ureaplasma parvum serovar 3 (strain ATCC 700970)</name>
    <dbReference type="NCBI Taxonomy" id="273119"/>
    <lineage>
        <taxon>Bacteria</taxon>
        <taxon>Bacillati</taxon>
        <taxon>Mycoplasmatota</taxon>
        <taxon>Mycoplasmoidales</taxon>
        <taxon>Mycoplasmoidaceae</taxon>
        <taxon>Ureaplasma</taxon>
    </lineage>
</organism>
<comment type="function">
    <text evidence="1">Responsible for the release of ribosomes from messenger RNA at the termination of protein biosynthesis. May increase the efficiency of translation by recycling ribosomes from one round of translation to another.</text>
</comment>
<comment type="subcellular location">
    <subcellularLocation>
        <location evidence="1">Cytoplasm</location>
    </subcellularLocation>
</comment>
<comment type="similarity">
    <text evidence="1">Belongs to the RRF family.</text>
</comment>
<dbReference type="EMBL" id="AF222894">
    <property type="protein sequence ID" value="AAF30925.1"/>
    <property type="molecule type" value="Genomic_DNA"/>
</dbReference>
<dbReference type="RefSeq" id="WP_006688460.1">
    <property type="nucleotide sequence ID" value="NC_002162.1"/>
</dbReference>
<dbReference type="SMR" id="Q9PPX7"/>
<dbReference type="STRING" id="273119.UU512"/>
<dbReference type="EnsemblBacteria" id="AAF30925">
    <property type="protein sequence ID" value="AAF30925"/>
    <property type="gene ID" value="UU512"/>
</dbReference>
<dbReference type="GeneID" id="29672213"/>
<dbReference type="KEGG" id="uur:UU512"/>
<dbReference type="eggNOG" id="COG0233">
    <property type="taxonomic scope" value="Bacteria"/>
</dbReference>
<dbReference type="HOGENOM" id="CLU_073981_2_0_14"/>
<dbReference type="OrthoDB" id="9804006at2"/>
<dbReference type="Proteomes" id="UP000000423">
    <property type="component" value="Chromosome"/>
</dbReference>
<dbReference type="GO" id="GO:0005737">
    <property type="term" value="C:cytoplasm"/>
    <property type="evidence" value="ECO:0007669"/>
    <property type="project" value="UniProtKB-SubCell"/>
</dbReference>
<dbReference type="GO" id="GO:0043023">
    <property type="term" value="F:ribosomal large subunit binding"/>
    <property type="evidence" value="ECO:0007669"/>
    <property type="project" value="TreeGrafter"/>
</dbReference>
<dbReference type="GO" id="GO:0006415">
    <property type="term" value="P:translational termination"/>
    <property type="evidence" value="ECO:0007669"/>
    <property type="project" value="UniProtKB-UniRule"/>
</dbReference>
<dbReference type="CDD" id="cd00520">
    <property type="entry name" value="RRF"/>
    <property type="match status" value="1"/>
</dbReference>
<dbReference type="FunFam" id="3.30.1360.40:FF:000001">
    <property type="entry name" value="Ribosome-recycling factor"/>
    <property type="match status" value="1"/>
</dbReference>
<dbReference type="Gene3D" id="3.30.1360.40">
    <property type="match status" value="1"/>
</dbReference>
<dbReference type="Gene3D" id="1.10.132.20">
    <property type="entry name" value="Ribosome-recycling factor"/>
    <property type="match status" value="1"/>
</dbReference>
<dbReference type="HAMAP" id="MF_00040">
    <property type="entry name" value="RRF"/>
    <property type="match status" value="1"/>
</dbReference>
<dbReference type="InterPro" id="IPR002661">
    <property type="entry name" value="Ribosome_recyc_fac"/>
</dbReference>
<dbReference type="InterPro" id="IPR023584">
    <property type="entry name" value="Ribosome_recyc_fac_dom"/>
</dbReference>
<dbReference type="InterPro" id="IPR036191">
    <property type="entry name" value="RRF_sf"/>
</dbReference>
<dbReference type="NCBIfam" id="TIGR00496">
    <property type="entry name" value="frr"/>
    <property type="match status" value="1"/>
</dbReference>
<dbReference type="PANTHER" id="PTHR20982:SF3">
    <property type="entry name" value="MITOCHONDRIAL RIBOSOME RECYCLING FACTOR PSEUDO 1"/>
    <property type="match status" value="1"/>
</dbReference>
<dbReference type="PANTHER" id="PTHR20982">
    <property type="entry name" value="RIBOSOME RECYCLING FACTOR"/>
    <property type="match status" value="1"/>
</dbReference>
<dbReference type="Pfam" id="PF01765">
    <property type="entry name" value="RRF"/>
    <property type="match status" value="1"/>
</dbReference>
<dbReference type="SUPFAM" id="SSF55194">
    <property type="entry name" value="Ribosome recycling factor, RRF"/>
    <property type="match status" value="1"/>
</dbReference>
<reference key="1">
    <citation type="journal article" date="2000" name="Nature">
        <title>The complete sequence of the mucosal pathogen Ureaplasma urealyticum.</title>
        <authorList>
            <person name="Glass J.I."/>
            <person name="Lefkowitz E.J."/>
            <person name="Glass J.S."/>
            <person name="Heiner C.R."/>
            <person name="Chen E.Y."/>
            <person name="Cassell G.H."/>
        </authorList>
    </citation>
    <scope>NUCLEOTIDE SEQUENCE [LARGE SCALE GENOMIC DNA]</scope>
    <source>
        <strain>ATCC 700970</strain>
    </source>
</reference>
<sequence>MNFKIYETKIREEFELVLKWMHNEFIKLRTGRATPAILDGILVNYYGSMMPINQLANISVPEPRVLAIKPYDRSSIKDIATAINASNLGVNPQVDVDIIRLTFAAPTEEVRKNLVKKAKQVGEEAKIRVRHIRQEAQDLFKKDSTTIEDDKKFFQTELDNLTKELNKEIETVVSHKEKDIMTV</sequence>
<gene>
    <name evidence="1" type="primary">frr</name>
    <name type="ordered locus">UU512</name>
</gene>
<protein>
    <recommendedName>
        <fullName evidence="1">Ribosome-recycling factor</fullName>
        <shortName evidence="1">RRF</shortName>
    </recommendedName>
    <alternativeName>
        <fullName evidence="1">Ribosome-releasing factor</fullName>
    </alternativeName>
</protein>
<proteinExistence type="inferred from homology"/>
<feature type="chain" id="PRO_0000167573" description="Ribosome-recycling factor">
    <location>
        <begin position="1"/>
        <end position="183"/>
    </location>
</feature>
<evidence type="ECO:0000255" key="1">
    <source>
        <dbReference type="HAMAP-Rule" id="MF_00040"/>
    </source>
</evidence>
<name>RRF_UREPA</name>